<name>PYRF_STRS7</name>
<comment type="function">
    <text evidence="1">Catalyzes the decarboxylation of orotidine 5'-monophosphate (OMP) to uridine 5'-monophosphate (UMP).</text>
</comment>
<comment type="catalytic activity">
    <reaction evidence="1">
        <text>orotidine 5'-phosphate + H(+) = UMP + CO2</text>
        <dbReference type="Rhea" id="RHEA:11596"/>
        <dbReference type="ChEBI" id="CHEBI:15378"/>
        <dbReference type="ChEBI" id="CHEBI:16526"/>
        <dbReference type="ChEBI" id="CHEBI:57538"/>
        <dbReference type="ChEBI" id="CHEBI:57865"/>
        <dbReference type="EC" id="4.1.1.23"/>
    </reaction>
</comment>
<comment type="pathway">
    <text evidence="1">Pyrimidine metabolism; UMP biosynthesis via de novo pathway; UMP from orotate: step 2/2.</text>
</comment>
<comment type="subunit">
    <text evidence="1">Homodimer.</text>
</comment>
<comment type="similarity">
    <text evidence="1">Belongs to the OMP decarboxylase family. Type 1 subfamily.</text>
</comment>
<keyword id="KW-0210">Decarboxylase</keyword>
<keyword id="KW-0456">Lyase</keyword>
<keyword id="KW-0665">Pyrimidine biosynthesis</keyword>
<feature type="chain" id="PRO_1000213826" description="Orotidine 5'-phosphate decarboxylase">
    <location>
        <begin position="1"/>
        <end position="230"/>
    </location>
</feature>
<feature type="active site" description="Proton donor" evidence="1">
    <location>
        <position position="63"/>
    </location>
</feature>
<feature type="binding site" evidence="1">
    <location>
        <position position="11"/>
    </location>
    <ligand>
        <name>substrate</name>
    </ligand>
</feature>
<feature type="binding site" evidence="1">
    <location>
        <position position="34"/>
    </location>
    <ligand>
        <name>substrate</name>
    </ligand>
</feature>
<feature type="binding site" evidence="1">
    <location>
        <begin position="61"/>
        <end position="70"/>
    </location>
    <ligand>
        <name>substrate</name>
    </ligand>
</feature>
<feature type="binding site" evidence="1">
    <location>
        <position position="117"/>
    </location>
    <ligand>
        <name>substrate</name>
    </ligand>
</feature>
<feature type="binding site" evidence="1">
    <location>
        <position position="179"/>
    </location>
    <ligand>
        <name>substrate</name>
    </ligand>
</feature>
<feature type="binding site" evidence="1">
    <location>
        <position position="188"/>
    </location>
    <ligand>
        <name>substrate</name>
    </ligand>
</feature>
<feature type="binding site" evidence="1">
    <location>
        <position position="208"/>
    </location>
    <ligand>
        <name>substrate</name>
    </ligand>
</feature>
<feature type="binding site" evidence="1">
    <location>
        <position position="209"/>
    </location>
    <ligand>
        <name>substrate</name>
    </ligand>
</feature>
<gene>
    <name evidence="1" type="primary">pyrF</name>
    <name type="ordered locus">SZO_08130</name>
</gene>
<accession>C0ME50</accession>
<protein>
    <recommendedName>
        <fullName evidence="1">Orotidine 5'-phosphate decarboxylase</fullName>
        <ecNumber evidence="1">4.1.1.23</ecNumber>
    </recommendedName>
    <alternativeName>
        <fullName evidence="1">OMP decarboxylase</fullName>
        <shortName evidence="1">OMPDCase</shortName>
        <shortName evidence="1">OMPdecase</shortName>
    </alternativeName>
</protein>
<sequence>MREERPIIALDFPSFEEVKSFLSLFPADERLYVKIGMELYYAEGPDIVRYIKSLGHSVFLDLKLHDIPNTVRSTMAVLSRLGIDMTTVQAAGGVEMLRAAREGLGQGPILIAVTQLTSTSEEQMREDQNIQSTLIASVLHYAKRTAQAKLDGVVCSAHEVKVIKAEVPVGFVCLTPGIRPTGADIGDQKRVMTPHQARAIGSDYIVLGRPITRAADPVKAYHQIKAEWNR</sequence>
<dbReference type="EC" id="4.1.1.23" evidence="1"/>
<dbReference type="EMBL" id="FM204884">
    <property type="protein sequence ID" value="CAW98983.1"/>
    <property type="molecule type" value="Genomic_DNA"/>
</dbReference>
<dbReference type="SMR" id="C0ME50"/>
<dbReference type="KEGG" id="seq:SZO_08130"/>
<dbReference type="eggNOG" id="COG0284">
    <property type="taxonomic scope" value="Bacteria"/>
</dbReference>
<dbReference type="HOGENOM" id="CLU_067069_1_1_9"/>
<dbReference type="UniPathway" id="UPA00070">
    <property type="reaction ID" value="UER00120"/>
</dbReference>
<dbReference type="Proteomes" id="UP000001368">
    <property type="component" value="Chromosome"/>
</dbReference>
<dbReference type="GO" id="GO:0005829">
    <property type="term" value="C:cytosol"/>
    <property type="evidence" value="ECO:0007669"/>
    <property type="project" value="TreeGrafter"/>
</dbReference>
<dbReference type="GO" id="GO:0004590">
    <property type="term" value="F:orotidine-5'-phosphate decarboxylase activity"/>
    <property type="evidence" value="ECO:0007669"/>
    <property type="project" value="UniProtKB-UniRule"/>
</dbReference>
<dbReference type="GO" id="GO:0006207">
    <property type="term" value="P:'de novo' pyrimidine nucleobase biosynthetic process"/>
    <property type="evidence" value="ECO:0007669"/>
    <property type="project" value="InterPro"/>
</dbReference>
<dbReference type="GO" id="GO:0044205">
    <property type="term" value="P:'de novo' UMP biosynthetic process"/>
    <property type="evidence" value="ECO:0007669"/>
    <property type="project" value="UniProtKB-UniRule"/>
</dbReference>
<dbReference type="CDD" id="cd04725">
    <property type="entry name" value="OMP_decarboxylase_like"/>
    <property type="match status" value="1"/>
</dbReference>
<dbReference type="FunFam" id="3.20.20.70:FF:000015">
    <property type="entry name" value="Orotidine 5'-phosphate decarboxylase"/>
    <property type="match status" value="1"/>
</dbReference>
<dbReference type="Gene3D" id="3.20.20.70">
    <property type="entry name" value="Aldolase class I"/>
    <property type="match status" value="1"/>
</dbReference>
<dbReference type="HAMAP" id="MF_01200_B">
    <property type="entry name" value="OMPdecase_type1_B"/>
    <property type="match status" value="1"/>
</dbReference>
<dbReference type="InterPro" id="IPR013785">
    <property type="entry name" value="Aldolase_TIM"/>
</dbReference>
<dbReference type="InterPro" id="IPR014732">
    <property type="entry name" value="OMPdecase"/>
</dbReference>
<dbReference type="InterPro" id="IPR018089">
    <property type="entry name" value="OMPdecase_AS"/>
</dbReference>
<dbReference type="InterPro" id="IPR047596">
    <property type="entry name" value="OMPdecase_bac"/>
</dbReference>
<dbReference type="InterPro" id="IPR001754">
    <property type="entry name" value="OMPdeCOase_dom"/>
</dbReference>
<dbReference type="InterPro" id="IPR011060">
    <property type="entry name" value="RibuloseP-bd_barrel"/>
</dbReference>
<dbReference type="NCBIfam" id="NF001273">
    <property type="entry name" value="PRK00230.1"/>
    <property type="match status" value="1"/>
</dbReference>
<dbReference type="NCBIfam" id="TIGR01740">
    <property type="entry name" value="pyrF"/>
    <property type="match status" value="1"/>
</dbReference>
<dbReference type="PANTHER" id="PTHR32119">
    <property type="entry name" value="OROTIDINE 5'-PHOSPHATE DECARBOXYLASE"/>
    <property type="match status" value="1"/>
</dbReference>
<dbReference type="PANTHER" id="PTHR32119:SF2">
    <property type="entry name" value="OROTIDINE 5'-PHOSPHATE DECARBOXYLASE"/>
    <property type="match status" value="1"/>
</dbReference>
<dbReference type="Pfam" id="PF00215">
    <property type="entry name" value="OMPdecase"/>
    <property type="match status" value="1"/>
</dbReference>
<dbReference type="SMART" id="SM00934">
    <property type="entry name" value="OMPdecase"/>
    <property type="match status" value="1"/>
</dbReference>
<dbReference type="SUPFAM" id="SSF51366">
    <property type="entry name" value="Ribulose-phoshate binding barrel"/>
    <property type="match status" value="1"/>
</dbReference>
<dbReference type="PROSITE" id="PS00156">
    <property type="entry name" value="OMPDECASE"/>
    <property type="match status" value="1"/>
</dbReference>
<reference key="1">
    <citation type="journal article" date="2009" name="PLoS Pathog.">
        <title>Genomic evidence for the evolution of Streptococcus equi: host restriction, increased virulence, and genetic exchange with human pathogens.</title>
        <authorList>
            <person name="Holden M.T.G."/>
            <person name="Heather Z."/>
            <person name="Paillot R."/>
            <person name="Steward K.F."/>
            <person name="Webb K."/>
            <person name="Ainslie F."/>
            <person name="Jourdan T."/>
            <person name="Bason N.C."/>
            <person name="Holroyd N.E."/>
            <person name="Mungall K."/>
            <person name="Quail M.A."/>
            <person name="Sanders M."/>
            <person name="Simmonds M."/>
            <person name="Willey D."/>
            <person name="Brooks K."/>
            <person name="Aanensen D.M."/>
            <person name="Spratt B.G."/>
            <person name="Jolley K.A."/>
            <person name="Maiden M.C.J."/>
            <person name="Kehoe M."/>
            <person name="Chanter N."/>
            <person name="Bentley S.D."/>
            <person name="Robinson C."/>
            <person name="Maskell D.J."/>
            <person name="Parkhill J."/>
            <person name="Waller A.S."/>
        </authorList>
    </citation>
    <scope>NUCLEOTIDE SEQUENCE [LARGE SCALE GENOMIC DNA]</scope>
    <source>
        <strain>H70</strain>
    </source>
</reference>
<proteinExistence type="inferred from homology"/>
<evidence type="ECO:0000255" key="1">
    <source>
        <dbReference type="HAMAP-Rule" id="MF_01200"/>
    </source>
</evidence>
<organism>
    <name type="scientific">Streptococcus equi subsp. zooepidemicus (strain H70)</name>
    <dbReference type="NCBI Taxonomy" id="553483"/>
    <lineage>
        <taxon>Bacteria</taxon>
        <taxon>Bacillati</taxon>
        <taxon>Bacillota</taxon>
        <taxon>Bacilli</taxon>
        <taxon>Lactobacillales</taxon>
        <taxon>Streptococcaceae</taxon>
        <taxon>Streptococcus</taxon>
    </lineage>
</organism>